<name>FGD_MYCTO</name>
<reference key="1">
    <citation type="journal article" date="2002" name="J. Bacteriol.">
        <title>Whole-genome comparison of Mycobacterium tuberculosis clinical and laboratory strains.</title>
        <authorList>
            <person name="Fleischmann R.D."/>
            <person name="Alland D."/>
            <person name="Eisen J.A."/>
            <person name="Carpenter L."/>
            <person name="White O."/>
            <person name="Peterson J.D."/>
            <person name="DeBoy R.T."/>
            <person name="Dodson R.J."/>
            <person name="Gwinn M.L."/>
            <person name="Haft D.H."/>
            <person name="Hickey E.K."/>
            <person name="Kolonay J.F."/>
            <person name="Nelson W.C."/>
            <person name="Umayam L.A."/>
            <person name="Ermolaeva M.D."/>
            <person name="Salzberg S.L."/>
            <person name="Delcher A."/>
            <person name="Utterback T.R."/>
            <person name="Weidman J.F."/>
            <person name="Khouri H.M."/>
            <person name="Gill J."/>
            <person name="Mikula A."/>
            <person name="Bishai W."/>
            <person name="Jacobs W.R. Jr."/>
            <person name="Venter J.C."/>
            <person name="Fraser C.M."/>
        </authorList>
    </citation>
    <scope>NUCLEOTIDE SEQUENCE [LARGE SCALE GENOMIC DNA]</scope>
    <source>
        <strain>CDC 1551 / Oshkosh</strain>
    </source>
</reference>
<dbReference type="EC" id="1.1.98.2" evidence="2"/>
<dbReference type="EMBL" id="AE000516">
    <property type="protein sequence ID" value="AAK44644.1"/>
    <property type="molecule type" value="Genomic_DNA"/>
</dbReference>
<dbReference type="PIR" id="E70628">
    <property type="entry name" value="E70628"/>
</dbReference>
<dbReference type="RefSeq" id="WP_003898438.1">
    <property type="nucleotide sequence ID" value="NZ_KK341227.1"/>
</dbReference>
<dbReference type="SMR" id="P9WNE0"/>
<dbReference type="BindingDB" id="P9WNE0"/>
<dbReference type="KEGG" id="mtc:MT0420"/>
<dbReference type="PATRIC" id="fig|83331.31.peg.449"/>
<dbReference type="HOGENOM" id="CLU_027853_4_0_11"/>
<dbReference type="Proteomes" id="UP000001020">
    <property type="component" value="Chromosome"/>
</dbReference>
<dbReference type="GO" id="GO:0070967">
    <property type="term" value="F:coenzyme F420 binding"/>
    <property type="evidence" value="ECO:0007669"/>
    <property type="project" value="UniProtKB-UniRule"/>
</dbReference>
<dbReference type="GO" id="GO:0052749">
    <property type="term" value="F:glucose-6-phosphate dehydrogenase (coenzyme F420) activity"/>
    <property type="evidence" value="ECO:0007669"/>
    <property type="project" value="UniProtKB-EC"/>
</dbReference>
<dbReference type="GO" id="GO:0016705">
    <property type="term" value="F:oxidoreductase activity, acting on paired donors, with incorporation or reduction of molecular oxygen"/>
    <property type="evidence" value="ECO:0007669"/>
    <property type="project" value="InterPro"/>
</dbReference>
<dbReference type="GO" id="GO:0005975">
    <property type="term" value="P:carbohydrate metabolic process"/>
    <property type="evidence" value="ECO:0007669"/>
    <property type="project" value="UniProtKB-UniRule"/>
</dbReference>
<dbReference type="CDD" id="cd01097">
    <property type="entry name" value="Tetrahydromethanopterin_reductase"/>
    <property type="match status" value="1"/>
</dbReference>
<dbReference type="FunFam" id="3.20.20.30:FF:000004">
    <property type="entry name" value="F420-dependent glucose-6-phosphate dehydrogenase"/>
    <property type="match status" value="1"/>
</dbReference>
<dbReference type="Gene3D" id="3.20.20.30">
    <property type="entry name" value="Luciferase-like domain"/>
    <property type="match status" value="1"/>
</dbReference>
<dbReference type="HAMAP" id="MF_02123">
    <property type="entry name" value="F420_G6P_DH"/>
    <property type="match status" value="1"/>
</dbReference>
<dbReference type="InterPro" id="IPR019944">
    <property type="entry name" value="F420-dep_G6P_DH"/>
</dbReference>
<dbReference type="InterPro" id="IPR050564">
    <property type="entry name" value="F420-G6PD/mer"/>
</dbReference>
<dbReference type="InterPro" id="IPR019945">
    <property type="entry name" value="F420_G6P_DH-rel"/>
</dbReference>
<dbReference type="InterPro" id="IPR011251">
    <property type="entry name" value="Luciferase-like_dom"/>
</dbReference>
<dbReference type="InterPro" id="IPR036661">
    <property type="entry name" value="Luciferase-like_sf"/>
</dbReference>
<dbReference type="NCBIfam" id="TIGR03554">
    <property type="entry name" value="F420_G6P_DH"/>
    <property type="match status" value="1"/>
</dbReference>
<dbReference type="NCBIfam" id="TIGR03557">
    <property type="entry name" value="F420_G6P_family"/>
    <property type="match status" value="1"/>
</dbReference>
<dbReference type="PANTHER" id="PTHR43244">
    <property type="match status" value="1"/>
</dbReference>
<dbReference type="PANTHER" id="PTHR43244:SF1">
    <property type="entry name" value="5,10-METHYLENETETRAHYDROMETHANOPTERIN REDUCTASE"/>
    <property type="match status" value="1"/>
</dbReference>
<dbReference type="Pfam" id="PF00296">
    <property type="entry name" value="Bac_luciferase"/>
    <property type="match status" value="1"/>
</dbReference>
<dbReference type="SUPFAM" id="SSF51679">
    <property type="entry name" value="Bacterial luciferase-like"/>
    <property type="match status" value="1"/>
</dbReference>
<organism>
    <name type="scientific">Mycobacterium tuberculosis (strain CDC 1551 / Oshkosh)</name>
    <dbReference type="NCBI Taxonomy" id="83331"/>
    <lineage>
        <taxon>Bacteria</taxon>
        <taxon>Bacillati</taxon>
        <taxon>Actinomycetota</taxon>
        <taxon>Actinomycetes</taxon>
        <taxon>Mycobacteriales</taxon>
        <taxon>Mycobacteriaceae</taxon>
        <taxon>Mycobacterium</taxon>
        <taxon>Mycobacterium tuberculosis complex</taxon>
    </lineage>
</organism>
<accession>P9WNE0</accession>
<accession>L0T6D5</accession>
<accession>P96253</accession>
<accession>Q7D9V4</accession>
<sequence>MAELKLGYKASAEQFAPRELVELAVAAEAHGMDSATVSDHFQPWRHQGGHAPFSLSWMTAVGERTNRLLLGTSVLTPTFRYNPAVIAQAFATMGCLYPNRVFLGVGTGEALNEIATGYEGAWPEFKERFARLRESVGLMRQLWSGDRVDFDGDYYRLKGASIYDVPDGGVPVYIAAGGPAVAKYAGRAGDGFICTSGKGEELYTEKLMPAVREGAAAADRSVDGIDKMIEIKISYDPDPELALNNTRFWAPLSLTAEQKHSIDDPIEMEKAADALPIEQIAKRWIVASDPDEAVEKVGQYVTWGLNHLVFHAPGHDQRRFLELFQSDLAPRLRRLG</sequence>
<evidence type="ECO:0000250" key="1">
    <source>
        <dbReference type="UniProtKB" id="P9WNE1"/>
    </source>
</evidence>
<evidence type="ECO:0000255" key="2">
    <source>
        <dbReference type="HAMAP-Rule" id="MF_02123"/>
    </source>
</evidence>
<comment type="function">
    <text evidence="1 2">Catalyzes the coenzyme F420-dependent oxidation of glucose 6-phosphate (G6P) to 6-phosphogluconolactone. Appears to have a role in resistance to oxidative stress, via its consumption of G6P that serves as a source of reducing power to combat oxidative stress in mycobacteria. More precisely, is likely involved in a F420-dependent anti-oxidant mechanism that protects M.tuberculosis against oxidative stress and bactericidal agents.</text>
</comment>
<comment type="function">
    <text evidence="1">Is essential for the bioreductive activation of the bicyclic 4-nitroimidazole prodrug PA-824 (nitroimidazo-oxazine) developed for anti-tuberculosis therapy against both replicating and persistent bacteria. It does not interact directly with PA-824 but, rather, provides reduced F420 to the deazaflavin-dependent nitroreductase Ddn, which in turn activates PA-824.</text>
</comment>
<comment type="catalytic activity">
    <reaction evidence="2">
        <text>oxidized coenzyme F420-(gamma-L-Glu)(n) + D-glucose 6-phosphate + H(+) = 6-phospho-D-glucono-1,5-lactone + reduced coenzyme F420-(gamma-L-Glu)(n)</text>
        <dbReference type="Rhea" id="RHEA:27294"/>
        <dbReference type="Rhea" id="RHEA-COMP:12939"/>
        <dbReference type="Rhea" id="RHEA-COMP:14378"/>
        <dbReference type="ChEBI" id="CHEBI:15378"/>
        <dbReference type="ChEBI" id="CHEBI:57955"/>
        <dbReference type="ChEBI" id="CHEBI:61548"/>
        <dbReference type="ChEBI" id="CHEBI:133980"/>
        <dbReference type="ChEBI" id="CHEBI:139511"/>
        <dbReference type="EC" id="1.1.98.2"/>
    </reaction>
</comment>
<comment type="subunit">
    <text evidence="2">Homodimer.</text>
</comment>
<comment type="similarity">
    <text evidence="2">Belongs to the F420-dependent glucose-6-phosphate dehydrogenase family.</text>
</comment>
<feature type="chain" id="PRO_0000427143" description="F420-dependent glucose-6-phosphate dehydrogenase">
    <location>
        <begin position="1"/>
        <end position="336"/>
    </location>
</feature>
<feature type="active site" description="Proton donor" evidence="2">
    <location>
        <position position="40"/>
    </location>
</feature>
<feature type="active site" description="Proton acceptor" evidence="2">
    <location>
        <position position="109"/>
    </location>
</feature>
<feature type="binding site" evidence="2">
    <location>
        <position position="39"/>
    </location>
    <ligand>
        <name>coenzyme F420-(gamma-Glu)n</name>
        <dbReference type="ChEBI" id="CHEBI:133980"/>
    </ligand>
</feature>
<feature type="binding site" evidence="2">
    <location>
        <position position="76"/>
    </location>
    <ligand>
        <name>coenzyme F420-(gamma-Glu)n</name>
        <dbReference type="ChEBI" id="CHEBI:133980"/>
    </ligand>
</feature>
<feature type="binding site" evidence="2">
    <location>
        <begin position="107"/>
        <end position="108"/>
    </location>
    <ligand>
        <name>coenzyme F420-(gamma-Glu)n</name>
        <dbReference type="ChEBI" id="CHEBI:133980"/>
    </ligand>
</feature>
<feature type="binding site" evidence="2">
    <location>
        <position position="112"/>
    </location>
    <ligand>
        <name>coenzyme F420-(gamma-Glu)n</name>
        <dbReference type="ChEBI" id="CHEBI:133980"/>
    </ligand>
</feature>
<feature type="binding site" evidence="2">
    <location>
        <begin position="177"/>
        <end position="178"/>
    </location>
    <ligand>
        <name>coenzyme F420-(gamma-Glu)n</name>
        <dbReference type="ChEBI" id="CHEBI:133980"/>
    </ligand>
</feature>
<feature type="binding site" evidence="2">
    <location>
        <begin position="180"/>
        <end position="181"/>
    </location>
    <ligand>
        <name>coenzyme F420-(gamma-Glu)n</name>
        <dbReference type="ChEBI" id="CHEBI:133980"/>
    </ligand>
</feature>
<feature type="binding site" evidence="2">
    <location>
        <position position="195"/>
    </location>
    <ligand>
        <name>substrate</name>
    </ligand>
</feature>
<feature type="binding site" evidence="2">
    <location>
        <position position="198"/>
    </location>
    <ligand>
        <name>substrate</name>
    </ligand>
</feature>
<feature type="binding site" evidence="2">
    <location>
        <position position="259"/>
    </location>
    <ligand>
        <name>substrate</name>
    </ligand>
</feature>
<feature type="binding site" evidence="2">
    <location>
        <position position="283"/>
    </location>
    <ligand>
        <name>substrate</name>
    </ligand>
</feature>
<proteinExistence type="inferred from homology"/>
<gene>
    <name type="primary">fgd1</name>
    <name type="synonym">fgd</name>
    <name type="ordered locus">MT0420</name>
</gene>
<keyword id="KW-0119">Carbohydrate metabolism</keyword>
<keyword id="KW-0560">Oxidoreductase</keyword>
<keyword id="KW-1185">Reference proteome</keyword>
<protein>
    <recommendedName>
        <fullName evidence="2">F420-dependent glucose-6-phosphate dehydrogenase</fullName>
        <shortName evidence="2">FGD</shortName>
        <shortName evidence="2">FGD1</shortName>
        <shortName evidence="2">G6PD</shortName>
        <ecNumber evidence="2">1.1.98.2</ecNumber>
    </recommendedName>
</protein>